<proteinExistence type="inferred from homology"/>
<reference key="1">
    <citation type="journal article" date="2008" name="J. Bacteriol.">
        <title>Genome sequence of Staphylococcus aureus strain Newman and comparative analysis of staphylococcal genomes: polymorphism and evolution of two major pathogenicity islands.</title>
        <authorList>
            <person name="Baba T."/>
            <person name="Bae T."/>
            <person name="Schneewind O."/>
            <person name="Takeuchi F."/>
            <person name="Hiramatsu K."/>
        </authorList>
    </citation>
    <scope>NUCLEOTIDE SEQUENCE [LARGE SCALE GENOMIC DNA]</scope>
    <source>
        <strain>Newman</strain>
    </source>
</reference>
<organism>
    <name type="scientific">Staphylococcus aureus (strain Newman)</name>
    <dbReference type="NCBI Taxonomy" id="426430"/>
    <lineage>
        <taxon>Bacteria</taxon>
        <taxon>Bacillati</taxon>
        <taxon>Bacillota</taxon>
        <taxon>Bacilli</taxon>
        <taxon>Bacillales</taxon>
        <taxon>Staphylococcaceae</taxon>
        <taxon>Staphylococcus</taxon>
    </lineage>
</organism>
<keyword id="KW-0030">Aminoacyl-tRNA synthetase</keyword>
<keyword id="KW-0067">ATP-binding</keyword>
<keyword id="KW-0963">Cytoplasm</keyword>
<keyword id="KW-0436">Ligase</keyword>
<keyword id="KW-0547">Nucleotide-binding</keyword>
<keyword id="KW-0648">Protein biosynthesis</keyword>
<protein>
    <recommendedName>
        <fullName evidence="1">Serine--tRNA ligase</fullName>
        <ecNumber evidence="1">6.1.1.11</ecNumber>
    </recommendedName>
    <alternativeName>
        <fullName evidence="1">Seryl-tRNA synthetase</fullName>
        <shortName evidence="1">SerRS</shortName>
    </alternativeName>
    <alternativeName>
        <fullName evidence="1">Seryl-tRNA(Ser/Sec) synthetase</fullName>
    </alternativeName>
</protein>
<comment type="function">
    <text evidence="1">Catalyzes the attachment of serine to tRNA(Ser). Is also able to aminoacylate tRNA(Sec) with serine, to form the misacylated tRNA L-seryl-tRNA(Sec), which will be further converted into selenocysteinyl-tRNA(Sec).</text>
</comment>
<comment type="catalytic activity">
    <reaction evidence="1">
        <text>tRNA(Ser) + L-serine + ATP = L-seryl-tRNA(Ser) + AMP + diphosphate + H(+)</text>
        <dbReference type="Rhea" id="RHEA:12292"/>
        <dbReference type="Rhea" id="RHEA-COMP:9669"/>
        <dbReference type="Rhea" id="RHEA-COMP:9703"/>
        <dbReference type="ChEBI" id="CHEBI:15378"/>
        <dbReference type="ChEBI" id="CHEBI:30616"/>
        <dbReference type="ChEBI" id="CHEBI:33019"/>
        <dbReference type="ChEBI" id="CHEBI:33384"/>
        <dbReference type="ChEBI" id="CHEBI:78442"/>
        <dbReference type="ChEBI" id="CHEBI:78533"/>
        <dbReference type="ChEBI" id="CHEBI:456215"/>
        <dbReference type="EC" id="6.1.1.11"/>
    </reaction>
</comment>
<comment type="catalytic activity">
    <reaction evidence="1">
        <text>tRNA(Sec) + L-serine + ATP = L-seryl-tRNA(Sec) + AMP + diphosphate + H(+)</text>
        <dbReference type="Rhea" id="RHEA:42580"/>
        <dbReference type="Rhea" id="RHEA-COMP:9742"/>
        <dbReference type="Rhea" id="RHEA-COMP:10128"/>
        <dbReference type="ChEBI" id="CHEBI:15378"/>
        <dbReference type="ChEBI" id="CHEBI:30616"/>
        <dbReference type="ChEBI" id="CHEBI:33019"/>
        <dbReference type="ChEBI" id="CHEBI:33384"/>
        <dbReference type="ChEBI" id="CHEBI:78442"/>
        <dbReference type="ChEBI" id="CHEBI:78533"/>
        <dbReference type="ChEBI" id="CHEBI:456215"/>
        <dbReference type="EC" id="6.1.1.11"/>
    </reaction>
</comment>
<comment type="pathway">
    <text evidence="1">Aminoacyl-tRNA biosynthesis; selenocysteinyl-tRNA(Sec) biosynthesis; L-seryl-tRNA(Sec) from L-serine and tRNA(Sec): step 1/1.</text>
</comment>
<comment type="subunit">
    <text evidence="1">Homodimer. The tRNA molecule binds across the dimer.</text>
</comment>
<comment type="subcellular location">
    <subcellularLocation>
        <location evidence="1">Cytoplasm</location>
    </subcellularLocation>
</comment>
<comment type="domain">
    <text evidence="1">Consists of two distinct domains, a catalytic core and a N-terminal extension that is involved in tRNA binding.</text>
</comment>
<comment type="similarity">
    <text evidence="1">Belongs to the class-II aminoacyl-tRNA synthetase family. Type-1 seryl-tRNA synthetase subfamily.</text>
</comment>
<sequence>MLDIRLFRNEPDTVKSKIELRGDDPKVVDEILELDEQRRKLISATEEMKARRNKVSEEIALKKRNKENADDVIAEMRTLGDDIKEKDSQLNEIDNKMTGILCRIPNLISDDVPQGESDEDNVEVKKWGTPREFSFEPKAHWDIVEELKMADFDRAAKVSGARFVYLTNEGAQLERALMNYMITKHTTQHGYTEMMVPQLVNADTMYGTGQLPKFEEDLFKVEKEGLYTIPTAEVPLTNFYRNEIIQPGVLPEKFTGQSACFRSEAGSAGRDTRGLIRLHQFDKVEMVRFEQPEDSWNALEEMTTNAEAILEELGLPYRRVILCTGDIGFSASKTYDLEVWLPSYNDYKEISSCSNCTDFQARRANIRFKRDKAAKPELAHTLNGSGLAVGRTFAAIVENYQNEDGTVTIPEALVPFMGGKTQISKPVK</sequence>
<evidence type="ECO:0000255" key="1">
    <source>
        <dbReference type="HAMAP-Rule" id="MF_00176"/>
    </source>
</evidence>
<accession>A6QD48</accession>
<gene>
    <name evidence="1" type="primary">serS</name>
    <name type="ordered locus">NWMN_0008</name>
</gene>
<dbReference type="EC" id="6.1.1.11" evidence="1"/>
<dbReference type="EMBL" id="AP009351">
    <property type="protein sequence ID" value="BAF66280.1"/>
    <property type="molecule type" value="Genomic_DNA"/>
</dbReference>
<dbReference type="RefSeq" id="WP_000884334.1">
    <property type="nucleotide sequence ID" value="NZ_JBBIAE010000007.1"/>
</dbReference>
<dbReference type="SMR" id="A6QD48"/>
<dbReference type="KEGG" id="sae:NWMN_0008"/>
<dbReference type="HOGENOM" id="CLU_023797_1_1_9"/>
<dbReference type="UniPathway" id="UPA00906">
    <property type="reaction ID" value="UER00895"/>
</dbReference>
<dbReference type="Proteomes" id="UP000006386">
    <property type="component" value="Chromosome"/>
</dbReference>
<dbReference type="GO" id="GO:0005737">
    <property type="term" value="C:cytoplasm"/>
    <property type="evidence" value="ECO:0007669"/>
    <property type="project" value="UniProtKB-SubCell"/>
</dbReference>
<dbReference type="GO" id="GO:0005524">
    <property type="term" value="F:ATP binding"/>
    <property type="evidence" value="ECO:0007669"/>
    <property type="project" value="UniProtKB-UniRule"/>
</dbReference>
<dbReference type="GO" id="GO:0140096">
    <property type="term" value="F:catalytic activity, acting on a protein"/>
    <property type="evidence" value="ECO:0007669"/>
    <property type="project" value="UniProtKB-ARBA"/>
</dbReference>
<dbReference type="GO" id="GO:0004828">
    <property type="term" value="F:serine-tRNA ligase activity"/>
    <property type="evidence" value="ECO:0007669"/>
    <property type="project" value="UniProtKB-UniRule"/>
</dbReference>
<dbReference type="GO" id="GO:0016740">
    <property type="term" value="F:transferase activity"/>
    <property type="evidence" value="ECO:0007669"/>
    <property type="project" value="UniProtKB-ARBA"/>
</dbReference>
<dbReference type="GO" id="GO:0016260">
    <property type="term" value="P:selenocysteine biosynthetic process"/>
    <property type="evidence" value="ECO:0007669"/>
    <property type="project" value="UniProtKB-UniRule"/>
</dbReference>
<dbReference type="GO" id="GO:0006434">
    <property type="term" value="P:seryl-tRNA aminoacylation"/>
    <property type="evidence" value="ECO:0007669"/>
    <property type="project" value="UniProtKB-UniRule"/>
</dbReference>
<dbReference type="CDD" id="cd00770">
    <property type="entry name" value="SerRS_core"/>
    <property type="match status" value="1"/>
</dbReference>
<dbReference type="Gene3D" id="3.30.930.10">
    <property type="entry name" value="Bira Bifunctional Protein, Domain 2"/>
    <property type="match status" value="1"/>
</dbReference>
<dbReference type="Gene3D" id="1.10.287.40">
    <property type="entry name" value="Serine-tRNA synthetase, tRNA binding domain"/>
    <property type="match status" value="1"/>
</dbReference>
<dbReference type="HAMAP" id="MF_00176">
    <property type="entry name" value="Ser_tRNA_synth_type1"/>
    <property type="match status" value="1"/>
</dbReference>
<dbReference type="InterPro" id="IPR002314">
    <property type="entry name" value="aa-tRNA-synt_IIb"/>
</dbReference>
<dbReference type="InterPro" id="IPR006195">
    <property type="entry name" value="aa-tRNA-synth_II"/>
</dbReference>
<dbReference type="InterPro" id="IPR045864">
    <property type="entry name" value="aa-tRNA-synth_II/BPL/LPL"/>
</dbReference>
<dbReference type="InterPro" id="IPR002317">
    <property type="entry name" value="Ser-tRNA-ligase_type_1"/>
</dbReference>
<dbReference type="InterPro" id="IPR015866">
    <property type="entry name" value="Ser-tRNA-synth_1_N"/>
</dbReference>
<dbReference type="InterPro" id="IPR042103">
    <property type="entry name" value="SerRS_1_N_sf"/>
</dbReference>
<dbReference type="InterPro" id="IPR033729">
    <property type="entry name" value="SerRS_core"/>
</dbReference>
<dbReference type="InterPro" id="IPR010978">
    <property type="entry name" value="tRNA-bd_arm"/>
</dbReference>
<dbReference type="NCBIfam" id="TIGR00414">
    <property type="entry name" value="serS"/>
    <property type="match status" value="1"/>
</dbReference>
<dbReference type="PANTHER" id="PTHR43697:SF1">
    <property type="entry name" value="SERINE--TRNA LIGASE"/>
    <property type="match status" value="1"/>
</dbReference>
<dbReference type="PANTHER" id="PTHR43697">
    <property type="entry name" value="SERYL-TRNA SYNTHETASE"/>
    <property type="match status" value="1"/>
</dbReference>
<dbReference type="Pfam" id="PF02403">
    <property type="entry name" value="Seryl_tRNA_N"/>
    <property type="match status" value="1"/>
</dbReference>
<dbReference type="Pfam" id="PF00587">
    <property type="entry name" value="tRNA-synt_2b"/>
    <property type="match status" value="1"/>
</dbReference>
<dbReference type="PIRSF" id="PIRSF001529">
    <property type="entry name" value="Ser-tRNA-synth_IIa"/>
    <property type="match status" value="1"/>
</dbReference>
<dbReference type="PRINTS" id="PR00981">
    <property type="entry name" value="TRNASYNTHSER"/>
</dbReference>
<dbReference type="SUPFAM" id="SSF55681">
    <property type="entry name" value="Class II aaRS and biotin synthetases"/>
    <property type="match status" value="1"/>
</dbReference>
<dbReference type="SUPFAM" id="SSF46589">
    <property type="entry name" value="tRNA-binding arm"/>
    <property type="match status" value="1"/>
</dbReference>
<dbReference type="PROSITE" id="PS50862">
    <property type="entry name" value="AA_TRNA_LIGASE_II"/>
    <property type="match status" value="1"/>
</dbReference>
<feature type="chain" id="PRO_1000071639" description="Serine--tRNA ligase">
    <location>
        <begin position="1"/>
        <end position="428"/>
    </location>
</feature>
<feature type="binding site" evidence="1">
    <location>
        <begin position="231"/>
        <end position="233"/>
    </location>
    <ligand>
        <name>L-serine</name>
        <dbReference type="ChEBI" id="CHEBI:33384"/>
    </ligand>
</feature>
<feature type="binding site" evidence="1">
    <location>
        <begin position="262"/>
        <end position="264"/>
    </location>
    <ligand>
        <name>ATP</name>
        <dbReference type="ChEBI" id="CHEBI:30616"/>
    </ligand>
</feature>
<feature type="binding site" evidence="1">
    <location>
        <position position="285"/>
    </location>
    <ligand>
        <name>L-serine</name>
        <dbReference type="ChEBI" id="CHEBI:33384"/>
    </ligand>
</feature>
<feature type="binding site" evidence="1">
    <location>
        <begin position="349"/>
        <end position="352"/>
    </location>
    <ligand>
        <name>ATP</name>
        <dbReference type="ChEBI" id="CHEBI:30616"/>
    </ligand>
</feature>
<feature type="binding site" evidence="1">
    <location>
        <position position="385"/>
    </location>
    <ligand>
        <name>L-serine</name>
        <dbReference type="ChEBI" id="CHEBI:33384"/>
    </ligand>
</feature>
<name>SYS_STAAE</name>